<evidence type="ECO:0000255" key="1">
    <source>
        <dbReference type="HAMAP-Rule" id="MF_00219"/>
    </source>
</evidence>
<gene>
    <name evidence="1" type="primary">pyrC</name>
    <name type="ordered locus">MAE_08280</name>
</gene>
<keyword id="KW-0378">Hydrolase</keyword>
<keyword id="KW-0479">Metal-binding</keyword>
<keyword id="KW-0665">Pyrimidine biosynthesis</keyword>
<keyword id="KW-0862">Zinc</keyword>
<feature type="chain" id="PRO_1000078098" description="Dihydroorotase">
    <location>
        <begin position="1"/>
        <end position="344"/>
    </location>
</feature>
<feature type="active site" evidence="1">
    <location>
        <position position="247"/>
    </location>
</feature>
<feature type="binding site" evidence="1">
    <location>
        <position position="13"/>
    </location>
    <ligand>
        <name>Zn(2+)</name>
        <dbReference type="ChEBI" id="CHEBI:29105"/>
        <label>1</label>
    </ligand>
</feature>
<feature type="binding site" evidence="1">
    <location>
        <begin position="15"/>
        <end position="17"/>
    </location>
    <ligand>
        <name>substrate</name>
    </ligand>
</feature>
<feature type="binding site" evidence="1">
    <location>
        <position position="15"/>
    </location>
    <ligand>
        <name>Zn(2+)</name>
        <dbReference type="ChEBI" id="CHEBI:29105"/>
        <label>1</label>
    </ligand>
</feature>
<feature type="binding site" evidence="1">
    <location>
        <position position="41"/>
    </location>
    <ligand>
        <name>substrate</name>
    </ligand>
</feature>
<feature type="binding site" description="via carbamate group" evidence="1">
    <location>
        <position position="99"/>
    </location>
    <ligand>
        <name>Zn(2+)</name>
        <dbReference type="ChEBI" id="CHEBI:29105"/>
        <label>1</label>
    </ligand>
</feature>
<feature type="binding site" description="via carbamate group" evidence="1">
    <location>
        <position position="99"/>
    </location>
    <ligand>
        <name>Zn(2+)</name>
        <dbReference type="ChEBI" id="CHEBI:29105"/>
        <label>2</label>
    </ligand>
</feature>
<feature type="binding site" evidence="1">
    <location>
        <position position="136"/>
    </location>
    <ligand>
        <name>substrate</name>
    </ligand>
</feature>
<feature type="binding site" evidence="1">
    <location>
        <position position="136"/>
    </location>
    <ligand>
        <name>Zn(2+)</name>
        <dbReference type="ChEBI" id="CHEBI:29105"/>
        <label>2</label>
    </ligand>
</feature>
<feature type="binding site" evidence="1">
    <location>
        <position position="174"/>
    </location>
    <ligand>
        <name>Zn(2+)</name>
        <dbReference type="ChEBI" id="CHEBI:29105"/>
        <label>2</label>
    </ligand>
</feature>
<feature type="binding site" evidence="1">
    <location>
        <position position="219"/>
    </location>
    <ligand>
        <name>substrate</name>
    </ligand>
</feature>
<feature type="binding site" evidence="1">
    <location>
        <position position="247"/>
    </location>
    <ligand>
        <name>Zn(2+)</name>
        <dbReference type="ChEBI" id="CHEBI:29105"/>
        <label>1</label>
    </ligand>
</feature>
<feature type="binding site" evidence="1">
    <location>
        <position position="251"/>
    </location>
    <ligand>
        <name>substrate</name>
    </ligand>
</feature>
<feature type="binding site" evidence="1">
    <location>
        <position position="263"/>
    </location>
    <ligand>
        <name>substrate</name>
    </ligand>
</feature>
<feature type="modified residue" description="N6-carboxylysine" evidence="1">
    <location>
        <position position="99"/>
    </location>
</feature>
<dbReference type="EC" id="3.5.2.3" evidence="1"/>
<dbReference type="EMBL" id="AP009552">
    <property type="protein sequence ID" value="BAG00650.1"/>
    <property type="molecule type" value="Genomic_DNA"/>
</dbReference>
<dbReference type="RefSeq" id="WP_012264368.1">
    <property type="nucleotide sequence ID" value="NC_010296.1"/>
</dbReference>
<dbReference type="SMR" id="B0JQJ1"/>
<dbReference type="STRING" id="449447.MAE_08280"/>
<dbReference type="MEROPS" id="M38.A02"/>
<dbReference type="PaxDb" id="449447-MAE_08280"/>
<dbReference type="EnsemblBacteria" id="BAG00650">
    <property type="protein sequence ID" value="BAG00650"/>
    <property type="gene ID" value="MAE_08280"/>
</dbReference>
<dbReference type="KEGG" id="mar:MAE_08280"/>
<dbReference type="PATRIC" id="fig|449447.4.peg.769"/>
<dbReference type="eggNOG" id="COG0418">
    <property type="taxonomic scope" value="Bacteria"/>
</dbReference>
<dbReference type="HOGENOM" id="CLU_041558_1_0_3"/>
<dbReference type="BioCyc" id="MAER449447:MAE_RS03700-MONOMER"/>
<dbReference type="UniPathway" id="UPA00070">
    <property type="reaction ID" value="UER00117"/>
</dbReference>
<dbReference type="Proteomes" id="UP000001510">
    <property type="component" value="Chromosome"/>
</dbReference>
<dbReference type="GO" id="GO:0005829">
    <property type="term" value="C:cytosol"/>
    <property type="evidence" value="ECO:0007669"/>
    <property type="project" value="TreeGrafter"/>
</dbReference>
<dbReference type="GO" id="GO:0004151">
    <property type="term" value="F:dihydroorotase activity"/>
    <property type="evidence" value="ECO:0007669"/>
    <property type="project" value="UniProtKB-UniRule"/>
</dbReference>
<dbReference type="GO" id="GO:0008270">
    <property type="term" value="F:zinc ion binding"/>
    <property type="evidence" value="ECO:0007669"/>
    <property type="project" value="UniProtKB-UniRule"/>
</dbReference>
<dbReference type="GO" id="GO:0006207">
    <property type="term" value="P:'de novo' pyrimidine nucleobase biosynthetic process"/>
    <property type="evidence" value="ECO:0007669"/>
    <property type="project" value="TreeGrafter"/>
</dbReference>
<dbReference type="GO" id="GO:0044205">
    <property type="term" value="P:'de novo' UMP biosynthetic process"/>
    <property type="evidence" value="ECO:0007669"/>
    <property type="project" value="UniProtKB-UniRule"/>
</dbReference>
<dbReference type="CDD" id="cd01294">
    <property type="entry name" value="DHOase"/>
    <property type="match status" value="1"/>
</dbReference>
<dbReference type="FunFam" id="3.20.20.140:FF:000006">
    <property type="entry name" value="Dihydroorotase"/>
    <property type="match status" value="1"/>
</dbReference>
<dbReference type="Gene3D" id="3.20.20.140">
    <property type="entry name" value="Metal-dependent hydrolases"/>
    <property type="match status" value="1"/>
</dbReference>
<dbReference type="HAMAP" id="MF_00219">
    <property type="entry name" value="PyrC_classII"/>
    <property type="match status" value="1"/>
</dbReference>
<dbReference type="InterPro" id="IPR006680">
    <property type="entry name" value="Amidohydro-rel"/>
</dbReference>
<dbReference type="InterPro" id="IPR004721">
    <property type="entry name" value="DHOdimr"/>
</dbReference>
<dbReference type="InterPro" id="IPR002195">
    <property type="entry name" value="Dihydroorotase_CS"/>
</dbReference>
<dbReference type="InterPro" id="IPR032466">
    <property type="entry name" value="Metal_Hydrolase"/>
</dbReference>
<dbReference type="NCBIfam" id="TIGR00856">
    <property type="entry name" value="pyrC_dimer"/>
    <property type="match status" value="1"/>
</dbReference>
<dbReference type="PANTHER" id="PTHR43137">
    <property type="entry name" value="DIHYDROOROTASE"/>
    <property type="match status" value="1"/>
</dbReference>
<dbReference type="PANTHER" id="PTHR43137:SF1">
    <property type="entry name" value="DIHYDROOROTASE"/>
    <property type="match status" value="1"/>
</dbReference>
<dbReference type="Pfam" id="PF01979">
    <property type="entry name" value="Amidohydro_1"/>
    <property type="match status" value="1"/>
</dbReference>
<dbReference type="PIRSF" id="PIRSF001237">
    <property type="entry name" value="DHOdimr"/>
    <property type="match status" value="1"/>
</dbReference>
<dbReference type="SUPFAM" id="SSF51556">
    <property type="entry name" value="Metallo-dependent hydrolases"/>
    <property type="match status" value="1"/>
</dbReference>
<dbReference type="PROSITE" id="PS00482">
    <property type="entry name" value="DIHYDROOROTASE_1"/>
    <property type="match status" value="1"/>
</dbReference>
<dbReference type="PROSITE" id="PS00483">
    <property type="entry name" value="DIHYDROOROTASE_2"/>
    <property type="match status" value="1"/>
</dbReference>
<proteinExistence type="inferred from homology"/>
<name>PYRC_MICAN</name>
<sequence>MRRLTMTRPDDWHLHLRDGAAMKAVLPHTVRQFARAIIMPNLKPPVRSVADAASYRERILAAVPEGQQFEPLMTLYLTDNTSPEEIVAAKASQFVKAVKYYPAGATTNSDLGVTDLRRCDGVLAAMEQVDMPLLLHGEVTDGDIDVFDREKVFIEKHLIPLITRFPKLRVVFEHITTADAVKFVLSANNNVAATITPQHLLFSRNILFTGGIRPHFYCLPILKREDHRLALLQAATSGNPKFFLGTDSAPHSRYSKESSCGCAGCYSALHALELYAEAFESVDAIDQLEGFASFHGPDFYQLPRNTEQITLTKSPWRIPDELPFPESGLVPLRAGEEITWQLGE</sequence>
<accession>B0JQJ1</accession>
<protein>
    <recommendedName>
        <fullName evidence="1">Dihydroorotase</fullName>
        <shortName evidence="1">DHOase</shortName>
        <ecNumber evidence="1">3.5.2.3</ecNumber>
    </recommendedName>
</protein>
<comment type="function">
    <text evidence="1">Catalyzes the reversible cyclization of carbamoyl aspartate to dihydroorotate.</text>
</comment>
<comment type="catalytic activity">
    <reaction evidence="1">
        <text>(S)-dihydroorotate + H2O = N-carbamoyl-L-aspartate + H(+)</text>
        <dbReference type="Rhea" id="RHEA:24296"/>
        <dbReference type="ChEBI" id="CHEBI:15377"/>
        <dbReference type="ChEBI" id="CHEBI:15378"/>
        <dbReference type="ChEBI" id="CHEBI:30864"/>
        <dbReference type="ChEBI" id="CHEBI:32814"/>
        <dbReference type="EC" id="3.5.2.3"/>
    </reaction>
</comment>
<comment type="cofactor">
    <cofactor evidence="1">
        <name>Zn(2+)</name>
        <dbReference type="ChEBI" id="CHEBI:29105"/>
    </cofactor>
    <text evidence="1">Binds 2 Zn(2+) ions per subunit.</text>
</comment>
<comment type="pathway">
    <text evidence="1">Pyrimidine metabolism; UMP biosynthesis via de novo pathway; (S)-dihydroorotate from bicarbonate: step 3/3.</text>
</comment>
<comment type="subunit">
    <text evidence="1">Homodimer.</text>
</comment>
<comment type="similarity">
    <text evidence="1">Belongs to the metallo-dependent hydrolases superfamily. DHOase family. Class II DHOase subfamily.</text>
</comment>
<organism>
    <name type="scientific">Microcystis aeruginosa (strain NIES-843 / IAM M-2473)</name>
    <dbReference type="NCBI Taxonomy" id="449447"/>
    <lineage>
        <taxon>Bacteria</taxon>
        <taxon>Bacillati</taxon>
        <taxon>Cyanobacteriota</taxon>
        <taxon>Cyanophyceae</taxon>
        <taxon>Oscillatoriophycideae</taxon>
        <taxon>Chroococcales</taxon>
        <taxon>Microcystaceae</taxon>
        <taxon>Microcystis</taxon>
    </lineage>
</organism>
<reference key="1">
    <citation type="journal article" date="2007" name="DNA Res.">
        <title>Complete genomic structure of the bloom-forming toxic cyanobacterium Microcystis aeruginosa NIES-843.</title>
        <authorList>
            <person name="Kaneko T."/>
            <person name="Nakajima N."/>
            <person name="Okamoto S."/>
            <person name="Suzuki I."/>
            <person name="Tanabe Y."/>
            <person name="Tamaoki M."/>
            <person name="Nakamura Y."/>
            <person name="Kasai F."/>
            <person name="Watanabe A."/>
            <person name="Kawashima K."/>
            <person name="Kishida Y."/>
            <person name="Ono A."/>
            <person name="Shimizu Y."/>
            <person name="Takahashi C."/>
            <person name="Minami C."/>
            <person name="Fujishiro T."/>
            <person name="Kohara M."/>
            <person name="Katoh M."/>
            <person name="Nakazaki N."/>
            <person name="Nakayama S."/>
            <person name="Yamada M."/>
            <person name="Tabata S."/>
            <person name="Watanabe M.M."/>
        </authorList>
    </citation>
    <scope>NUCLEOTIDE SEQUENCE [LARGE SCALE GENOMIC DNA]</scope>
    <source>
        <strain>NIES-843 / IAM M-247</strain>
    </source>
</reference>